<accession>B1MC85</accession>
<sequence length="261" mass="27268">MSRKPLIAGNWKMNLNHFEAIALVQKIAFSLPDKYFDKVDVTVIPPFTDIRSVQTLVDGDKLRLTYGAQDLSVYDSGAYTGEVSGAFLAKLGVTYVVVGHSERRQYHGEDDALVAAKAAAALKHGLTPIVCIGEALDIREAGDHVQYNVNSLRGSLAGLSAEQVGKVVIAYEPVWAIGTGRVASAADAQEVCAAIRAELAQIANADVAGSVRVLYGGSANAKNVGEIVAQEDVDGALVGGASLDGEQFAQMSAIAAGGPLL</sequence>
<gene>
    <name evidence="1" type="primary">tpiA</name>
    <name type="ordered locus">MAB_2777c</name>
</gene>
<proteinExistence type="inferred from homology"/>
<protein>
    <recommendedName>
        <fullName evidence="1">Triosephosphate isomerase</fullName>
        <shortName evidence="1">TIM</shortName>
        <shortName evidence="1">TPI</shortName>
        <ecNumber evidence="1">5.3.1.1</ecNumber>
    </recommendedName>
    <alternativeName>
        <fullName evidence="1">Triose-phosphate isomerase</fullName>
    </alternativeName>
</protein>
<dbReference type="EC" id="5.3.1.1" evidence="1"/>
<dbReference type="EMBL" id="CU458896">
    <property type="protein sequence ID" value="CAM62856.1"/>
    <property type="molecule type" value="Genomic_DNA"/>
</dbReference>
<dbReference type="RefSeq" id="WP_005057795.1">
    <property type="nucleotide sequence ID" value="NZ_MLCG01000003.1"/>
</dbReference>
<dbReference type="SMR" id="B1MC85"/>
<dbReference type="GeneID" id="93379708"/>
<dbReference type="KEGG" id="mab:MAB_2777c"/>
<dbReference type="UniPathway" id="UPA00109">
    <property type="reaction ID" value="UER00189"/>
</dbReference>
<dbReference type="UniPathway" id="UPA00138"/>
<dbReference type="Proteomes" id="UP000007137">
    <property type="component" value="Chromosome"/>
</dbReference>
<dbReference type="GO" id="GO:0005829">
    <property type="term" value="C:cytosol"/>
    <property type="evidence" value="ECO:0007669"/>
    <property type="project" value="TreeGrafter"/>
</dbReference>
<dbReference type="GO" id="GO:0004807">
    <property type="term" value="F:triose-phosphate isomerase activity"/>
    <property type="evidence" value="ECO:0007669"/>
    <property type="project" value="UniProtKB-UniRule"/>
</dbReference>
<dbReference type="GO" id="GO:0006094">
    <property type="term" value="P:gluconeogenesis"/>
    <property type="evidence" value="ECO:0007669"/>
    <property type="project" value="UniProtKB-UniRule"/>
</dbReference>
<dbReference type="GO" id="GO:0046166">
    <property type="term" value="P:glyceraldehyde-3-phosphate biosynthetic process"/>
    <property type="evidence" value="ECO:0007669"/>
    <property type="project" value="TreeGrafter"/>
</dbReference>
<dbReference type="GO" id="GO:0019563">
    <property type="term" value="P:glycerol catabolic process"/>
    <property type="evidence" value="ECO:0007669"/>
    <property type="project" value="TreeGrafter"/>
</dbReference>
<dbReference type="GO" id="GO:0006096">
    <property type="term" value="P:glycolytic process"/>
    <property type="evidence" value="ECO:0007669"/>
    <property type="project" value="UniProtKB-UniRule"/>
</dbReference>
<dbReference type="CDD" id="cd00311">
    <property type="entry name" value="TIM"/>
    <property type="match status" value="1"/>
</dbReference>
<dbReference type="FunFam" id="3.20.20.70:FF:000020">
    <property type="entry name" value="Triosephosphate isomerase"/>
    <property type="match status" value="1"/>
</dbReference>
<dbReference type="Gene3D" id="3.20.20.70">
    <property type="entry name" value="Aldolase class I"/>
    <property type="match status" value="1"/>
</dbReference>
<dbReference type="HAMAP" id="MF_00147_B">
    <property type="entry name" value="TIM_B"/>
    <property type="match status" value="1"/>
</dbReference>
<dbReference type="InterPro" id="IPR013785">
    <property type="entry name" value="Aldolase_TIM"/>
</dbReference>
<dbReference type="InterPro" id="IPR035990">
    <property type="entry name" value="TIM_sf"/>
</dbReference>
<dbReference type="InterPro" id="IPR022896">
    <property type="entry name" value="TrioseP_Isoase_bac/euk"/>
</dbReference>
<dbReference type="InterPro" id="IPR000652">
    <property type="entry name" value="Triosephosphate_isomerase"/>
</dbReference>
<dbReference type="InterPro" id="IPR020861">
    <property type="entry name" value="Triosephosphate_isomerase_AS"/>
</dbReference>
<dbReference type="NCBIfam" id="TIGR00419">
    <property type="entry name" value="tim"/>
    <property type="match status" value="1"/>
</dbReference>
<dbReference type="PANTHER" id="PTHR21139">
    <property type="entry name" value="TRIOSEPHOSPHATE ISOMERASE"/>
    <property type="match status" value="1"/>
</dbReference>
<dbReference type="PANTHER" id="PTHR21139:SF42">
    <property type="entry name" value="TRIOSEPHOSPHATE ISOMERASE"/>
    <property type="match status" value="1"/>
</dbReference>
<dbReference type="Pfam" id="PF00121">
    <property type="entry name" value="TIM"/>
    <property type="match status" value="1"/>
</dbReference>
<dbReference type="SUPFAM" id="SSF51351">
    <property type="entry name" value="Triosephosphate isomerase (TIM)"/>
    <property type="match status" value="1"/>
</dbReference>
<dbReference type="PROSITE" id="PS00171">
    <property type="entry name" value="TIM_1"/>
    <property type="match status" value="1"/>
</dbReference>
<dbReference type="PROSITE" id="PS51440">
    <property type="entry name" value="TIM_2"/>
    <property type="match status" value="1"/>
</dbReference>
<keyword id="KW-0963">Cytoplasm</keyword>
<keyword id="KW-0312">Gluconeogenesis</keyword>
<keyword id="KW-0324">Glycolysis</keyword>
<keyword id="KW-0413">Isomerase</keyword>
<keyword id="KW-1185">Reference proteome</keyword>
<evidence type="ECO:0000255" key="1">
    <source>
        <dbReference type="HAMAP-Rule" id="MF_00147"/>
    </source>
</evidence>
<organism>
    <name type="scientific">Mycobacteroides abscessus (strain ATCC 19977 / DSM 44196 / CCUG 20993 / CIP 104536 / JCM 13569 / NCTC 13031 / TMC 1543 / L948)</name>
    <name type="common">Mycobacterium abscessus</name>
    <dbReference type="NCBI Taxonomy" id="561007"/>
    <lineage>
        <taxon>Bacteria</taxon>
        <taxon>Bacillati</taxon>
        <taxon>Actinomycetota</taxon>
        <taxon>Actinomycetes</taxon>
        <taxon>Mycobacteriales</taxon>
        <taxon>Mycobacteriaceae</taxon>
        <taxon>Mycobacteroides</taxon>
        <taxon>Mycobacteroides abscessus</taxon>
    </lineage>
</organism>
<feature type="chain" id="PRO_1000096511" description="Triosephosphate isomerase">
    <location>
        <begin position="1"/>
        <end position="261"/>
    </location>
</feature>
<feature type="active site" description="Electrophile" evidence="1">
    <location>
        <position position="100"/>
    </location>
</feature>
<feature type="active site" description="Proton acceptor" evidence="1">
    <location>
        <position position="172"/>
    </location>
</feature>
<feature type="binding site" evidence="1">
    <location>
        <begin position="10"/>
        <end position="12"/>
    </location>
    <ligand>
        <name>substrate</name>
    </ligand>
</feature>
<feature type="binding site" evidence="1">
    <location>
        <position position="178"/>
    </location>
    <ligand>
        <name>substrate</name>
    </ligand>
</feature>
<feature type="binding site" evidence="1">
    <location>
        <position position="218"/>
    </location>
    <ligand>
        <name>substrate</name>
    </ligand>
</feature>
<feature type="binding site" evidence="1">
    <location>
        <begin position="239"/>
        <end position="240"/>
    </location>
    <ligand>
        <name>substrate</name>
    </ligand>
</feature>
<reference key="1">
    <citation type="journal article" date="2009" name="PLoS ONE">
        <title>Non mycobacterial virulence genes in the genome of the emerging pathogen Mycobacterium abscessus.</title>
        <authorList>
            <person name="Ripoll F."/>
            <person name="Pasek S."/>
            <person name="Schenowitz C."/>
            <person name="Dossat C."/>
            <person name="Barbe V."/>
            <person name="Rottman M."/>
            <person name="Macheras E."/>
            <person name="Heym B."/>
            <person name="Herrmann J.L."/>
            <person name="Daffe M."/>
            <person name="Brosch R."/>
            <person name="Risler J.L."/>
            <person name="Gaillard J.L."/>
        </authorList>
    </citation>
    <scope>NUCLEOTIDE SEQUENCE [LARGE SCALE GENOMIC DNA]</scope>
    <source>
        <strain>ATCC 19977 / DSM 44196 / CCUG 20993 / CIP 104536 / JCM 13569 / NCTC 13031 / TMC 1543 / L948</strain>
    </source>
</reference>
<name>TPIS_MYCA9</name>
<comment type="function">
    <text evidence="1">Involved in the gluconeogenesis. Catalyzes stereospecifically the conversion of dihydroxyacetone phosphate (DHAP) to D-glyceraldehyde-3-phosphate (G3P).</text>
</comment>
<comment type="catalytic activity">
    <reaction evidence="1">
        <text>D-glyceraldehyde 3-phosphate = dihydroxyacetone phosphate</text>
        <dbReference type="Rhea" id="RHEA:18585"/>
        <dbReference type="ChEBI" id="CHEBI:57642"/>
        <dbReference type="ChEBI" id="CHEBI:59776"/>
        <dbReference type="EC" id="5.3.1.1"/>
    </reaction>
</comment>
<comment type="pathway">
    <text evidence="1">Carbohydrate biosynthesis; gluconeogenesis.</text>
</comment>
<comment type="pathway">
    <text evidence="1">Carbohydrate degradation; glycolysis; D-glyceraldehyde 3-phosphate from glycerone phosphate: step 1/1.</text>
</comment>
<comment type="subunit">
    <text evidence="1">Homodimer.</text>
</comment>
<comment type="subcellular location">
    <subcellularLocation>
        <location evidence="1">Cytoplasm</location>
    </subcellularLocation>
</comment>
<comment type="similarity">
    <text evidence="1">Belongs to the triosephosphate isomerase family.</text>
</comment>